<evidence type="ECO:0000255" key="1">
    <source>
        <dbReference type="HAMAP-Rule" id="MF_01001"/>
    </source>
</evidence>
<dbReference type="EC" id="2.4.1.180" evidence="1"/>
<dbReference type="EMBL" id="CP000800">
    <property type="protein sequence ID" value="ABV17771.1"/>
    <property type="molecule type" value="Genomic_DNA"/>
</dbReference>
<dbReference type="RefSeq" id="WP_001064038.1">
    <property type="nucleotide sequence ID" value="NC_009801.1"/>
</dbReference>
<dbReference type="SMR" id="A7ZTZ8"/>
<dbReference type="CAZy" id="GT26">
    <property type="family name" value="Glycosyltransferase Family 26"/>
</dbReference>
<dbReference type="GeneID" id="93778149"/>
<dbReference type="KEGG" id="ecw:EcE24377A_4307"/>
<dbReference type="HOGENOM" id="CLU_063203_3_2_6"/>
<dbReference type="UniPathway" id="UPA00566"/>
<dbReference type="Proteomes" id="UP000001122">
    <property type="component" value="Chromosome"/>
</dbReference>
<dbReference type="GO" id="GO:0047241">
    <property type="term" value="F:lipopolysaccharide N-acetylmannosaminouronosyltransferase activity"/>
    <property type="evidence" value="ECO:0007669"/>
    <property type="project" value="UniProtKB-UniRule"/>
</dbReference>
<dbReference type="GO" id="GO:0009246">
    <property type="term" value="P:enterobacterial common antigen biosynthetic process"/>
    <property type="evidence" value="ECO:0007669"/>
    <property type="project" value="UniProtKB-UniRule"/>
</dbReference>
<dbReference type="CDD" id="cd06533">
    <property type="entry name" value="Glyco_transf_WecG_TagA"/>
    <property type="match status" value="1"/>
</dbReference>
<dbReference type="HAMAP" id="MF_01001">
    <property type="entry name" value="WecG_RffM"/>
    <property type="match status" value="1"/>
</dbReference>
<dbReference type="InterPro" id="IPR023085">
    <property type="entry name" value="UDP-ManNAcA_Trfase_WecG"/>
</dbReference>
<dbReference type="InterPro" id="IPR004629">
    <property type="entry name" value="WecG_TagA_CpsF"/>
</dbReference>
<dbReference type="NCBIfam" id="NF002980">
    <property type="entry name" value="PRK03692.1"/>
    <property type="match status" value="1"/>
</dbReference>
<dbReference type="NCBIfam" id="TIGR00696">
    <property type="entry name" value="wecG_tagA_cpsF"/>
    <property type="match status" value="1"/>
</dbReference>
<dbReference type="PANTHER" id="PTHR34136">
    <property type="match status" value="1"/>
</dbReference>
<dbReference type="PANTHER" id="PTHR34136:SF1">
    <property type="entry name" value="UDP-N-ACETYL-D-MANNOSAMINURONIC ACID TRANSFERASE"/>
    <property type="match status" value="1"/>
</dbReference>
<dbReference type="Pfam" id="PF03808">
    <property type="entry name" value="Glyco_tran_WecG"/>
    <property type="match status" value="1"/>
</dbReference>
<sequence length="246" mass="27962">MNNNTTAPTYTLRGLQLIGWRDMQHALDYLFADGQLKQGTLVAINAEKMLTIEDNAEVRELINAAEFKYADGISVVRSVRKKYPQAQVSRVAGADLWEELMARAGKEGTPVFLVGGKPEVLAQTEAKLRNQWNVNIVGSQDGYFKPEQRQALFERIHASGAQIVTVAMGSPKQEIFMRDCRLVHPDALYMGVGGTYDVFTGHVKRAPKIWQTLGLEWLYRLLSQPSRIKRQLRLLRYLRWHYTGNL</sequence>
<organism>
    <name type="scientific">Escherichia coli O139:H28 (strain E24377A / ETEC)</name>
    <dbReference type="NCBI Taxonomy" id="331111"/>
    <lineage>
        <taxon>Bacteria</taxon>
        <taxon>Pseudomonadati</taxon>
        <taxon>Pseudomonadota</taxon>
        <taxon>Gammaproteobacteria</taxon>
        <taxon>Enterobacterales</taxon>
        <taxon>Enterobacteriaceae</taxon>
        <taxon>Escherichia</taxon>
    </lineage>
</organism>
<accession>A7ZTZ8</accession>
<comment type="function">
    <text evidence="1">Catalyzes the synthesis of Und-PP-GlcNAc-ManNAcA (Lipid II), the second lipid-linked intermediate involved in enterobacterial common antigen (ECA) synthesis.</text>
</comment>
<comment type="catalytic activity">
    <reaction evidence="1">
        <text>UDP-N-acetyl-alpha-D-mannosaminouronate + N-acetyl-alpha-D-glucosaminyl-di-trans,octa-cis-undecaprenyl diphosphate = beta-D-ManNAcA-(1-&gt;4)-alpha-D-GlcNAc-di-trans,octa-cis-undecaprenyl diphosphate + UDP + H(+)</text>
        <dbReference type="Rhea" id="RHEA:28366"/>
        <dbReference type="ChEBI" id="CHEBI:15378"/>
        <dbReference type="ChEBI" id="CHEBI:58223"/>
        <dbReference type="ChEBI" id="CHEBI:61495"/>
        <dbReference type="ChEBI" id="CHEBI:62959"/>
        <dbReference type="ChEBI" id="CHEBI:70731"/>
        <dbReference type="EC" id="2.4.1.180"/>
    </reaction>
</comment>
<comment type="pathway">
    <text evidence="1">Bacterial outer membrane biogenesis; enterobacterial common antigen biosynthesis.</text>
</comment>
<comment type="similarity">
    <text evidence="1">Belongs to the glycosyltransferase 26 family.</text>
</comment>
<proteinExistence type="inferred from homology"/>
<reference key="1">
    <citation type="journal article" date="2008" name="J. Bacteriol.">
        <title>The pangenome structure of Escherichia coli: comparative genomic analysis of E. coli commensal and pathogenic isolates.</title>
        <authorList>
            <person name="Rasko D.A."/>
            <person name="Rosovitz M.J."/>
            <person name="Myers G.S.A."/>
            <person name="Mongodin E.F."/>
            <person name="Fricke W.F."/>
            <person name="Gajer P."/>
            <person name="Crabtree J."/>
            <person name="Sebaihia M."/>
            <person name="Thomson N.R."/>
            <person name="Chaudhuri R."/>
            <person name="Henderson I.R."/>
            <person name="Sperandio V."/>
            <person name="Ravel J."/>
        </authorList>
    </citation>
    <scope>NUCLEOTIDE SEQUENCE [LARGE SCALE GENOMIC DNA]</scope>
    <source>
        <strain>E24377A / ETEC</strain>
    </source>
</reference>
<keyword id="KW-0328">Glycosyltransferase</keyword>
<keyword id="KW-1185">Reference proteome</keyword>
<keyword id="KW-0808">Transferase</keyword>
<feature type="chain" id="PRO_1000062725" description="UDP-N-acetyl-D-mannosaminuronic acid transferase">
    <location>
        <begin position="1"/>
        <end position="246"/>
    </location>
</feature>
<protein>
    <recommendedName>
        <fullName evidence="1">UDP-N-acetyl-D-mannosaminuronic acid transferase</fullName>
        <shortName evidence="1">UDP-ManNAcA transferase</shortName>
        <ecNumber evidence="1">2.4.1.180</ecNumber>
    </recommendedName>
</protein>
<gene>
    <name evidence="1" type="primary">wecG</name>
    <name evidence="1" type="synonym">rffM</name>
    <name type="ordered locus">EcE24377A_4307</name>
</gene>
<name>WECG_ECO24</name>